<evidence type="ECO:0000255" key="1"/>
<evidence type="ECO:0000256" key="2">
    <source>
        <dbReference type="SAM" id="MobiDB-lite"/>
    </source>
</evidence>
<evidence type="ECO:0000269" key="3">
    <source>
    </source>
</evidence>
<evidence type="ECO:0000305" key="4"/>
<organism>
    <name type="scientific">Mycoplasma genitalium (strain ATCC 33530 / DSM 19775 / NCTC 10195 / G37)</name>
    <name type="common">Mycoplasmoides genitalium</name>
    <dbReference type="NCBI Taxonomy" id="243273"/>
    <lineage>
        <taxon>Bacteria</taxon>
        <taxon>Bacillati</taxon>
        <taxon>Mycoplasmatota</taxon>
        <taxon>Mycoplasmoidales</taxon>
        <taxon>Mycoplasmoidaceae</taxon>
        <taxon>Mycoplasmoides</taxon>
    </lineage>
</organism>
<keyword id="KW-1003">Cell membrane</keyword>
<keyword id="KW-0472">Membrane</keyword>
<keyword id="KW-1185">Reference proteome</keyword>
<keyword id="KW-0812">Transmembrane</keyword>
<keyword id="KW-1133">Transmembrane helix</keyword>
<comment type="subcellular location">
    <subcellularLocation>
        <location evidence="4">Cell membrane</location>
        <topology evidence="4">Single-pass membrane protein</topology>
    </subcellularLocation>
</comment>
<comment type="disruption phenotype">
    <text evidence="3">Not essential, it can be deleted.</text>
</comment>
<proteinExistence type="predicted"/>
<accession>Q49403</accession>
<reference key="1">
    <citation type="journal article" date="1995" name="Science">
        <title>The minimal gene complement of Mycoplasma genitalium.</title>
        <authorList>
            <person name="Fraser C.M."/>
            <person name="Gocayne J.D."/>
            <person name="White O."/>
            <person name="Adams M.D."/>
            <person name="Clayton R.A."/>
            <person name="Fleischmann R.D."/>
            <person name="Bult C.J."/>
            <person name="Kerlavage A.R."/>
            <person name="Sutton G.G."/>
            <person name="Kelley J.M."/>
            <person name="Fritchman J.L."/>
            <person name="Weidman J.F."/>
            <person name="Small K.V."/>
            <person name="Sandusky M."/>
            <person name="Fuhrmann J.L."/>
            <person name="Nguyen D.T."/>
            <person name="Utterback T.R."/>
            <person name="Saudek D.M."/>
            <person name="Phillips C.A."/>
            <person name="Merrick J.M."/>
            <person name="Tomb J.-F."/>
            <person name="Dougherty B.A."/>
            <person name="Bott K.F."/>
            <person name="Hu P.-C."/>
            <person name="Lucier T.S."/>
            <person name="Peterson S.N."/>
            <person name="Smith H.O."/>
            <person name="Hutchison C.A. III"/>
            <person name="Venter J.C."/>
        </authorList>
    </citation>
    <scope>NUCLEOTIDE SEQUENCE [LARGE SCALE GENOMIC DNA]</scope>
    <source>
        <strain>ATCC 33530 / DSM 19775 / NCTC 10195 / G37</strain>
    </source>
</reference>
<reference key="2">
    <citation type="journal article" date="2006" name="Proc. Natl. Acad. Sci. U.S.A.">
        <title>Essential genes of a minimal bacterium.</title>
        <authorList>
            <person name="Glass J.I."/>
            <person name="Assad-Garcia N."/>
            <person name="Alperovich N."/>
            <person name="Yooseph S."/>
            <person name="Lewis M.R."/>
            <person name="Maruf M."/>
            <person name="Hutchison C.A. III"/>
            <person name="Smith H.O."/>
            <person name="Venter J.C."/>
        </authorList>
    </citation>
    <scope>SEQUENCE REVISION</scope>
    <scope>DISRUPTION PHENOTYPE</scope>
    <source>
        <strain>ATCC 33530 / DSM 19775 / NCTC 10195 / G37</strain>
    </source>
</reference>
<feature type="chain" id="PRO_0000210463" description="Uncharacterized protein MG220">
    <location>
        <begin position="1"/>
        <end position="93"/>
    </location>
</feature>
<feature type="transmembrane region" description="Helical" evidence="1">
    <location>
        <begin position="12"/>
        <end position="32"/>
    </location>
</feature>
<feature type="region of interest" description="Disordered" evidence="2">
    <location>
        <begin position="47"/>
        <end position="66"/>
    </location>
</feature>
<protein>
    <recommendedName>
        <fullName>Uncharacterized protein MG220</fullName>
    </recommendedName>
</protein>
<sequence>MYKLEKAQAKQVVGGLSFWTFSAGLIMIVNALTGVAHAVNDIFQSTTANANGSDDDNENKNNSYRSKSNYFNTARFKLGLTPGSSSYSFPVFS</sequence>
<gene>
    <name type="ordered locus">MG220</name>
</gene>
<name>Y220_MYCGE</name>
<dbReference type="EMBL" id="L43967">
    <property type="protein sequence ID" value="AAC71441.2"/>
    <property type="molecule type" value="Genomic_DNA"/>
</dbReference>
<dbReference type="PIR" id="C64224">
    <property type="entry name" value="C64224"/>
</dbReference>
<dbReference type="RefSeq" id="WP_009885758.1">
    <property type="nucleotide sequence ID" value="NC_000908.2"/>
</dbReference>
<dbReference type="STRING" id="243273.MG_220"/>
<dbReference type="GeneID" id="88282364"/>
<dbReference type="KEGG" id="mge:MG_220"/>
<dbReference type="HOGENOM" id="CLU_188377_0_0_14"/>
<dbReference type="InParanoid" id="Q49403"/>
<dbReference type="OrthoDB" id="9972921at2"/>
<dbReference type="Proteomes" id="UP000000807">
    <property type="component" value="Chromosome"/>
</dbReference>
<dbReference type="GO" id="GO:0005886">
    <property type="term" value="C:plasma membrane"/>
    <property type="evidence" value="ECO:0007669"/>
    <property type="project" value="UniProtKB-SubCell"/>
</dbReference>
<dbReference type="NCBIfam" id="NF045747">
    <property type="entry name" value="MPN313"/>
    <property type="match status" value="1"/>
</dbReference>